<comment type="function">
    <text>In molluscan muscle, calcium regulation is associated with myosin rather than with actin. Muscle myosin contains two types of light chains: the catalytic light chain, essential for ATPase activity, and the regulatory light chain, a calcium-binding protein responsible for Ca(2+) dependent binding and Ca(2+) dependent Mg-ATPase activity.</text>
</comment>
<comment type="miscellaneous">
    <text>This chain binds calcium.</text>
</comment>
<organism>
    <name type="scientific">Chlamys nipponensis akazara</name>
    <name type="common">Akazara scallop</name>
    <name type="synonym">Japanese scallop</name>
    <dbReference type="NCBI Taxonomy" id="6571"/>
    <lineage>
        <taxon>Eukaryota</taxon>
        <taxon>Metazoa</taxon>
        <taxon>Spiralia</taxon>
        <taxon>Lophotrochozoa</taxon>
        <taxon>Mollusca</taxon>
        <taxon>Bivalvia</taxon>
        <taxon>Autobranchia</taxon>
        <taxon>Pteriomorphia</taxon>
        <taxon>Pectinida</taxon>
        <taxon>Pectinoidea</taxon>
        <taxon>Pectinidae</taxon>
        <taxon>Chlamys</taxon>
    </lineage>
</organism>
<accession>P05963</accession>
<sequence>ADKAASGVLTKLPQKQIQEMKEAFSMLDVDRDGFVNKDDLKAISEQLGRTPDDKELTAMLKEAPGPLNFTMFLSIFSDKLSGTDSEETIRNAFAMFDELETKKLNIEYIKDLLENMGDNFTKDEMRMTFKEAPVTGGKFDYVKFTAMIKGSGEDDA</sequence>
<keyword id="KW-0106">Calcium</keyword>
<keyword id="KW-0903">Direct protein sequencing</keyword>
<keyword id="KW-0479">Metal-binding</keyword>
<keyword id="KW-0505">Motor protein</keyword>
<keyword id="KW-0514">Muscle protein</keyword>
<keyword id="KW-0518">Myosin</keyword>
<keyword id="KW-0677">Repeat</keyword>
<protein>
    <recommendedName>
        <fullName>Myosin regulatory light chain, striated adductor muscle</fullName>
    </recommendedName>
</protein>
<dbReference type="PIR" id="B28863">
    <property type="entry name" value="B28863"/>
</dbReference>
<dbReference type="SMR" id="P05963"/>
<dbReference type="GO" id="GO:0016459">
    <property type="term" value="C:myosin complex"/>
    <property type="evidence" value="ECO:0007669"/>
    <property type="project" value="UniProtKB-KW"/>
</dbReference>
<dbReference type="GO" id="GO:0005509">
    <property type="term" value="F:calcium ion binding"/>
    <property type="evidence" value="ECO:0007669"/>
    <property type="project" value="InterPro"/>
</dbReference>
<dbReference type="FunFam" id="1.10.238.10:FF:000007">
    <property type="entry name" value="Putative myosin regulatory light chain sqh"/>
    <property type="match status" value="1"/>
</dbReference>
<dbReference type="Gene3D" id="1.10.238.10">
    <property type="entry name" value="EF-hand"/>
    <property type="match status" value="2"/>
</dbReference>
<dbReference type="InterPro" id="IPR011992">
    <property type="entry name" value="EF-hand-dom_pair"/>
</dbReference>
<dbReference type="InterPro" id="IPR018247">
    <property type="entry name" value="EF_Hand_1_Ca_BS"/>
</dbReference>
<dbReference type="InterPro" id="IPR002048">
    <property type="entry name" value="EF_hand_dom"/>
</dbReference>
<dbReference type="InterPro" id="IPR050403">
    <property type="entry name" value="Myosin_RLC"/>
</dbReference>
<dbReference type="PANTHER" id="PTHR23049">
    <property type="entry name" value="MYOSIN REGULATORY LIGHT CHAIN 2"/>
    <property type="match status" value="1"/>
</dbReference>
<dbReference type="Pfam" id="PF13499">
    <property type="entry name" value="EF-hand_7"/>
    <property type="match status" value="1"/>
</dbReference>
<dbReference type="SMART" id="SM00054">
    <property type="entry name" value="EFh"/>
    <property type="match status" value="2"/>
</dbReference>
<dbReference type="SUPFAM" id="SSF47473">
    <property type="entry name" value="EF-hand"/>
    <property type="match status" value="1"/>
</dbReference>
<dbReference type="PROSITE" id="PS00018">
    <property type="entry name" value="EF_HAND_1"/>
    <property type="match status" value="1"/>
</dbReference>
<dbReference type="PROSITE" id="PS50222">
    <property type="entry name" value="EF_HAND_2"/>
    <property type="match status" value="2"/>
</dbReference>
<evidence type="ECO:0000255" key="1">
    <source>
        <dbReference type="PROSITE-ProRule" id="PRU00448"/>
    </source>
</evidence>
<name>MLR_CHLNI</name>
<feature type="chain" id="PRO_0000198752" description="Myosin regulatory light chain, striated adductor muscle">
    <location>
        <begin position="1"/>
        <end position="156"/>
    </location>
</feature>
<feature type="domain" description="EF-hand 1" evidence="1">
    <location>
        <begin position="15"/>
        <end position="50"/>
    </location>
</feature>
<feature type="domain" description="EF-hand 2" evidence="1">
    <location>
        <begin position="84"/>
        <end position="119"/>
    </location>
</feature>
<feature type="binding site" evidence="1">
    <location>
        <position position="28"/>
    </location>
    <ligand>
        <name>Ca(2+)</name>
        <dbReference type="ChEBI" id="CHEBI:29108"/>
    </ligand>
</feature>
<feature type="binding site" evidence="1">
    <location>
        <position position="30"/>
    </location>
    <ligand>
        <name>Ca(2+)</name>
        <dbReference type="ChEBI" id="CHEBI:29108"/>
    </ligand>
</feature>
<feature type="binding site" evidence="1">
    <location>
        <position position="32"/>
    </location>
    <ligand>
        <name>Ca(2+)</name>
        <dbReference type="ChEBI" id="CHEBI:29108"/>
    </ligand>
</feature>
<feature type="binding site" evidence="1">
    <location>
        <position position="39"/>
    </location>
    <ligand>
        <name>Ca(2+)</name>
        <dbReference type="ChEBI" id="CHEBI:29108"/>
    </ligand>
</feature>
<feature type="modified residue" description="Blocked amino end (Ala)">
    <location>
        <position position="1"/>
    </location>
</feature>
<feature type="sequence variant">
    <original>D</original>
    <variation>E</variation>
    <location>
        <position position="155"/>
    </location>
</feature>
<reference key="1">
    <citation type="journal article" date="1984" name="J. Biochem.">
        <title>Amino acid sequences of the regulatory light chains of striated adductor muscle myosins from Ezo giant scallop and Akazara scallop.</title>
        <authorList>
            <person name="Maita T."/>
            <person name="Konno K."/>
            <person name="Ojima T."/>
            <person name="Matsuda G."/>
        </authorList>
    </citation>
    <scope>PROTEIN SEQUENCE</scope>
</reference>
<proteinExistence type="evidence at protein level"/>